<comment type="function">
    <text evidence="3">Serine protease inhibitor. Inhibits trypsin, elastase, plasmin and kallikrein.</text>
</comment>
<organism>
    <name type="scientific">Rhipicephalus sanguineus</name>
    <name type="common">Brown dog tick</name>
    <name type="synonym">Ixodes sanguineus</name>
    <dbReference type="NCBI Taxonomy" id="34632"/>
    <lineage>
        <taxon>Eukaryota</taxon>
        <taxon>Metazoa</taxon>
        <taxon>Ecdysozoa</taxon>
        <taxon>Arthropoda</taxon>
        <taxon>Chelicerata</taxon>
        <taxon>Arachnida</taxon>
        <taxon>Acari</taxon>
        <taxon>Parasitiformes</taxon>
        <taxon>Ixodida</taxon>
        <taxon>Ixodoidea</taxon>
        <taxon>Ixodidae</taxon>
        <taxon>Rhipicephalinae</taxon>
        <taxon>Rhipicephalus</taxon>
        <taxon>Rhipicephalus</taxon>
    </lineage>
</organism>
<evidence type="ECO:0000250" key="1">
    <source>
        <dbReference type="UniProtKB" id="P31713"/>
    </source>
</evidence>
<evidence type="ECO:0000255" key="2">
    <source>
        <dbReference type="PROSITE-ProRule" id="PRU00031"/>
    </source>
</evidence>
<evidence type="ECO:0000269" key="3">
    <source>
    </source>
</evidence>
<evidence type="ECO:0000303" key="4">
    <source>
    </source>
</evidence>
<evidence type="ECO:0000305" key="5"/>
<protein>
    <recommendedName>
        <fullName>Kunitz-type serine protease inhibitor RsTIQ2</fullName>
    </recommendedName>
</protein>
<sequence length="31" mass="3557">EAVDFDSQCVPTADPGKCKFYFPMWNVNVFT</sequence>
<proteinExistence type="evidence at protein level"/>
<dbReference type="GO" id="GO:0004867">
    <property type="term" value="F:serine-type endopeptidase inhibitor activity"/>
    <property type="evidence" value="ECO:0000314"/>
    <property type="project" value="UniProtKB"/>
</dbReference>
<feature type="chain" id="PRO_0000155459" description="Kunitz-type serine protease inhibitor RsTIQ2">
    <location>
        <begin position="1"/>
        <end position="31" status="greater than"/>
    </location>
</feature>
<feature type="domain" description="BPTI/Kunitz inhibitor" evidence="2">
    <location>
        <begin position="1"/>
        <end position="31" status="greater than"/>
    </location>
</feature>
<feature type="site" description="Reactive bond" evidence="1">
    <location>
        <begin position="19"/>
        <end position="20"/>
    </location>
</feature>
<feature type="disulfide bond" evidence="1 2">
    <location>
        <begin position="9"/>
        <end status="unknown"/>
    </location>
</feature>
<feature type="disulfide bond" evidence="1 2">
    <location>
        <begin position="18"/>
        <end status="unknown"/>
    </location>
</feature>
<feature type="non-terminal residue" evidence="4">
    <location>
        <position position="31"/>
    </location>
</feature>
<name>TIQ2_RHISA</name>
<reference evidence="5" key="1">
    <citation type="journal article" date="2003" name="Arch. Biochem. Biophys.">
        <title>Rhipicephalus sanguineus trypsin inhibitors present in the tick larvae: isolation, characterization, and partial primary structure determination.</title>
        <authorList>
            <person name="Sant'Anna Azzolini S."/>
            <person name="Sasaki S.D."/>
            <person name="Torquato R.J.S."/>
            <person name="Andreotti R."/>
            <person name="Andreotti E."/>
            <person name="Tanaka A.S."/>
        </authorList>
    </citation>
    <scope>PROTEIN SEQUENCE</scope>
    <scope>FUNCTION</scope>
    <source>
        <tissue evidence="3">Larva</tissue>
    </source>
</reference>
<keyword id="KW-0903">Direct protein sequencing</keyword>
<keyword id="KW-1015">Disulfide bond</keyword>
<keyword id="KW-0646">Protease inhibitor</keyword>
<keyword id="KW-0722">Serine protease inhibitor</keyword>
<accession>P84554</accession>